<reference key="1">
    <citation type="journal article" date="1986" name="Biochem. J.">
        <title>Molecular cloning of a cDNA and assignment of the C-terminal of sarcotoxin IA, a potent antibacterial protein of Sarcophaga peregrina.</title>
        <authorList>
            <person name="Matsumoto N."/>
            <person name="Okada M."/>
            <person name="Takahashi H."/>
            <person name="Ming Q.X."/>
            <person name="Nakajima Y."/>
            <person name="Nakanishi Y."/>
            <person name="Komano H."/>
            <person name="Natori S."/>
        </authorList>
    </citation>
    <scope>NUCLEOTIDE SEQUENCE [MRNA]</scope>
    <scope>AMIDATION AT ARG-62</scope>
</reference>
<reference key="2">
    <citation type="journal article" date="1985" name="J. Biol. Chem.">
        <title>Primary structure of sarcotoxin I, an antibacterial protein induced in the hemolymph of Sarcophaga peregrina (flesh fly) larvae.</title>
        <authorList>
            <person name="Okada M."/>
            <person name="Natori S."/>
        </authorList>
    </citation>
    <scope>PROTEIN SEQUENCE OF 24-62</scope>
    <scope>AMIDATION AT ARG-62</scope>
</reference>
<reference key="3">
    <citation type="journal article" date="1993" name="Eur. J. Biochem.">
        <title>Solution conformation of an antibacterial peptide, sarcotoxin IA, as determined by 1H-NMR.</title>
        <authorList>
            <person name="Iwai H."/>
            <person name="Nakajima Y."/>
            <person name="Natori S."/>
            <person name="Arata Y."/>
            <person name="Shimada I."/>
        </authorList>
    </citation>
    <scope>STRUCTURE BY NMR</scope>
</reference>
<keyword id="KW-0027">Amidation</keyword>
<keyword id="KW-0044">Antibiotic</keyword>
<keyword id="KW-0929">Antimicrobial</keyword>
<keyword id="KW-0903">Direct protein sequencing</keyword>
<keyword id="KW-0391">Immunity</keyword>
<keyword id="KW-0399">Innate immunity</keyword>
<keyword id="KW-0964">Secreted</keyword>
<keyword id="KW-0732">Signal</keyword>
<protein>
    <recommendedName>
        <fullName>Sarcotoxin-1A</fullName>
    </recommendedName>
    <alternativeName>
        <fullName>Sarcotoxin IA</fullName>
    </alternativeName>
</protein>
<proteinExistence type="evidence at protein level"/>
<dbReference type="EMBL" id="M25612">
    <property type="protein sequence ID" value="AAA29988.1"/>
    <property type="molecule type" value="mRNA"/>
</dbReference>
<dbReference type="PIR" id="A90334">
    <property type="entry name" value="CKFHAS"/>
</dbReference>
<dbReference type="SMR" id="P08375"/>
<dbReference type="TCDB" id="1.C.17.1.5">
    <property type="family name" value="the cecropin (cecropin) family"/>
</dbReference>
<dbReference type="GO" id="GO:0005615">
    <property type="term" value="C:extracellular space"/>
    <property type="evidence" value="ECO:0007669"/>
    <property type="project" value="TreeGrafter"/>
</dbReference>
<dbReference type="GO" id="GO:0019731">
    <property type="term" value="P:antibacterial humoral response"/>
    <property type="evidence" value="ECO:0007669"/>
    <property type="project" value="InterPro"/>
</dbReference>
<dbReference type="GO" id="GO:0050829">
    <property type="term" value="P:defense response to Gram-negative bacterium"/>
    <property type="evidence" value="ECO:0007669"/>
    <property type="project" value="UniProtKB-ARBA"/>
</dbReference>
<dbReference type="GO" id="GO:0050830">
    <property type="term" value="P:defense response to Gram-positive bacterium"/>
    <property type="evidence" value="ECO:0007669"/>
    <property type="project" value="TreeGrafter"/>
</dbReference>
<dbReference type="GO" id="GO:0045087">
    <property type="term" value="P:innate immune response"/>
    <property type="evidence" value="ECO:0007669"/>
    <property type="project" value="UniProtKB-KW"/>
</dbReference>
<dbReference type="InterPro" id="IPR000875">
    <property type="entry name" value="Cecropin"/>
</dbReference>
<dbReference type="InterPro" id="IPR020400">
    <property type="entry name" value="Cecropin_insect"/>
</dbReference>
<dbReference type="PANTHER" id="PTHR38329">
    <property type="entry name" value="CECROPIN-A1-RELATED"/>
    <property type="match status" value="1"/>
</dbReference>
<dbReference type="PANTHER" id="PTHR38329:SF1">
    <property type="entry name" value="CECROPIN-A1-RELATED"/>
    <property type="match status" value="1"/>
</dbReference>
<dbReference type="Pfam" id="PF00272">
    <property type="entry name" value="Cecropin"/>
    <property type="match status" value="1"/>
</dbReference>
<dbReference type="PROSITE" id="PS00268">
    <property type="entry name" value="CECROPIN"/>
    <property type="match status" value="1"/>
</dbReference>
<name>SRX1A_SARPE</name>
<feature type="signal peptide" evidence="2">
    <location>
        <begin position="1"/>
        <end position="23"/>
    </location>
</feature>
<feature type="chain" id="PRO_0000004875" description="Sarcotoxin-1A">
    <location>
        <begin position="24"/>
        <end position="62"/>
    </location>
</feature>
<feature type="modified residue" description="Arginine amide" evidence="1 2">
    <location>
        <position position="62"/>
    </location>
</feature>
<organism>
    <name type="scientific">Sarcophaga peregrina</name>
    <name type="common">Flesh fly</name>
    <name type="synonym">Boettcherisca peregrina</name>
    <dbReference type="NCBI Taxonomy" id="7386"/>
    <lineage>
        <taxon>Eukaryota</taxon>
        <taxon>Metazoa</taxon>
        <taxon>Ecdysozoa</taxon>
        <taxon>Arthropoda</taxon>
        <taxon>Hexapoda</taxon>
        <taxon>Insecta</taxon>
        <taxon>Pterygota</taxon>
        <taxon>Neoptera</taxon>
        <taxon>Endopterygota</taxon>
        <taxon>Diptera</taxon>
        <taxon>Brachycera</taxon>
        <taxon>Muscomorpha</taxon>
        <taxon>Oestroidea</taxon>
        <taxon>Sarcophagidae</taxon>
        <taxon>Sarcophaga</taxon>
        <taxon>Boettcherisca</taxon>
    </lineage>
</organism>
<accession>P08375</accession>
<sequence length="63" mass="6739">MNFQNIFIFVALILAVFAGQSQAGWLKKIGKKIERVGQHTRDATIQGLGIAQQAANVAATARG</sequence>
<evidence type="ECO:0000269" key="1">
    <source>
    </source>
</evidence>
<evidence type="ECO:0000269" key="2">
    <source>
    </source>
</evidence>
<evidence type="ECO:0000305" key="3"/>
<comment type="function">
    <text>Sarcotoxins, which are potent bactericidal proteins, are produced in response to injury. They are cytotoxic to both Gram-positive and Gram-negative bacteria.</text>
</comment>
<comment type="subcellular location">
    <subcellularLocation>
        <location>Secreted</location>
    </subcellularLocation>
</comment>
<comment type="similarity">
    <text evidence="3">Belongs to the cecropin family.</text>
</comment>